<feature type="chain" id="PRO_0000048799" description="SRY-related protein MG42">
    <location>
        <begin position="1" status="less than"/>
        <end position="72" status="greater than"/>
    </location>
</feature>
<feature type="DNA-binding region" description="HMG box" evidence="1">
    <location>
        <begin position="1"/>
        <end position="69"/>
    </location>
</feature>
<feature type="non-terminal residue">
    <location>
        <position position="1"/>
    </location>
</feature>
<feature type="non-terminal residue">
    <location>
        <position position="72"/>
    </location>
</feature>
<organism>
    <name type="scientific">Tarentola mauritanica</name>
    <name type="common">Common wall gecko</name>
    <name type="synonym">Lacerta mauritanica</name>
    <dbReference type="NCBI Taxonomy" id="8569"/>
    <lineage>
        <taxon>Eukaryota</taxon>
        <taxon>Metazoa</taxon>
        <taxon>Chordata</taxon>
        <taxon>Craniata</taxon>
        <taxon>Vertebrata</taxon>
        <taxon>Euteleostomi</taxon>
        <taxon>Lepidosauria</taxon>
        <taxon>Squamata</taxon>
        <taxon>Bifurcata</taxon>
        <taxon>Gekkota</taxon>
        <taxon>Phyllodactylidae</taxon>
        <taxon>Tarentola</taxon>
    </lineage>
</organism>
<keyword id="KW-0238">DNA-binding</keyword>
<keyword id="KW-0539">Nucleus</keyword>
<reference key="1">
    <citation type="journal article" date="1993" name="PCR Methods Appl.">
        <title>PCR amplification of SRY-related gene sequences reveals evolutionary conservation of the SRY-box motif.</title>
        <authorList>
            <person name="Coriat A.M."/>
            <person name="Mueller U."/>
            <person name="Harry J.L."/>
            <person name="Uwanogho D."/>
            <person name="Sharpe P.T."/>
        </authorList>
    </citation>
    <scope>NUCLEOTIDE SEQUENCE [GENOMIC DNA]</scope>
</reference>
<protein>
    <recommendedName>
        <fullName>SRY-related protein MG42</fullName>
    </recommendedName>
</protein>
<proteinExistence type="inferred from homology"/>
<sequence length="72" mass="8814">VKRPMNAFMVWSQNERRKIMDQWPDMHNAEISKRLGRPWQLLQDSEKIPFVKEAGRLRVKHMADYPNYKYRP</sequence>
<name>MG42_TARMA</name>
<evidence type="ECO:0000255" key="1">
    <source>
        <dbReference type="PROSITE-ProRule" id="PRU00267"/>
    </source>
</evidence>
<dbReference type="EMBL" id="M86337">
    <property type="protein sequence ID" value="AAA49621.1"/>
    <property type="molecule type" value="Genomic_DNA"/>
</dbReference>
<dbReference type="PIR" id="I51369">
    <property type="entry name" value="I51369"/>
</dbReference>
<dbReference type="SMR" id="P40651"/>
<dbReference type="GO" id="GO:0005634">
    <property type="term" value="C:nucleus"/>
    <property type="evidence" value="ECO:0007669"/>
    <property type="project" value="UniProtKB-SubCell"/>
</dbReference>
<dbReference type="GO" id="GO:0001228">
    <property type="term" value="F:DNA-binding transcription activator activity, RNA polymerase II-specific"/>
    <property type="evidence" value="ECO:0007669"/>
    <property type="project" value="TreeGrafter"/>
</dbReference>
<dbReference type="GO" id="GO:0000978">
    <property type="term" value="F:RNA polymerase II cis-regulatory region sequence-specific DNA binding"/>
    <property type="evidence" value="ECO:0007669"/>
    <property type="project" value="TreeGrafter"/>
</dbReference>
<dbReference type="GO" id="GO:0007420">
    <property type="term" value="P:brain development"/>
    <property type="evidence" value="ECO:0007669"/>
    <property type="project" value="TreeGrafter"/>
</dbReference>
<dbReference type="GO" id="GO:0048593">
    <property type="term" value="P:camera-type eye morphogenesis"/>
    <property type="evidence" value="ECO:0007669"/>
    <property type="project" value="TreeGrafter"/>
</dbReference>
<dbReference type="GO" id="GO:0000122">
    <property type="term" value="P:negative regulation of transcription by RNA polymerase II"/>
    <property type="evidence" value="ECO:0007669"/>
    <property type="project" value="TreeGrafter"/>
</dbReference>
<dbReference type="GO" id="GO:0030182">
    <property type="term" value="P:neuron differentiation"/>
    <property type="evidence" value="ECO:0007669"/>
    <property type="project" value="TreeGrafter"/>
</dbReference>
<dbReference type="FunFam" id="1.10.30.10:FF:000007">
    <property type="entry name" value="Transcription factor SOX"/>
    <property type="match status" value="1"/>
</dbReference>
<dbReference type="Gene3D" id="1.10.30.10">
    <property type="entry name" value="High mobility group box domain"/>
    <property type="match status" value="1"/>
</dbReference>
<dbReference type="InterPro" id="IPR009071">
    <property type="entry name" value="HMG_box_dom"/>
</dbReference>
<dbReference type="InterPro" id="IPR036910">
    <property type="entry name" value="HMG_box_dom_sf"/>
</dbReference>
<dbReference type="InterPro" id="IPR050140">
    <property type="entry name" value="SRY-related_HMG-box_TF-like"/>
</dbReference>
<dbReference type="PANTHER" id="PTHR10270">
    <property type="entry name" value="SOX TRANSCRIPTION FACTOR"/>
    <property type="match status" value="1"/>
</dbReference>
<dbReference type="PANTHER" id="PTHR10270:SF221">
    <property type="entry name" value="TRANSCRIPTION FACTOR SOX-12"/>
    <property type="match status" value="1"/>
</dbReference>
<dbReference type="Pfam" id="PF00505">
    <property type="entry name" value="HMG_box"/>
    <property type="match status" value="1"/>
</dbReference>
<dbReference type="SMART" id="SM00398">
    <property type="entry name" value="HMG"/>
    <property type="match status" value="1"/>
</dbReference>
<dbReference type="SUPFAM" id="SSF47095">
    <property type="entry name" value="HMG-box"/>
    <property type="match status" value="1"/>
</dbReference>
<dbReference type="PROSITE" id="PS50118">
    <property type="entry name" value="HMG_BOX_2"/>
    <property type="match status" value="1"/>
</dbReference>
<accession>P40651</accession>
<comment type="subcellular location">
    <subcellularLocation>
        <location evidence="1">Nucleus</location>
    </subcellularLocation>
</comment>